<dbReference type="EMBL" id="DP000700">
    <property type="protein sequence ID" value="ACC62105.1"/>
    <property type="molecule type" value="Genomic_DNA"/>
</dbReference>
<dbReference type="RefSeq" id="XP_032943366.1">
    <property type="nucleotide sequence ID" value="XM_033087475.1"/>
</dbReference>
<dbReference type="SMR" id="B2KI30"/>
<dbReference type="FunCoup" id="B2KI30">
    <property type="interactions" value="255"/>
</dbReference>
<dbReference type="MEROPS" id="I04.015"/>
<dbReference type="GeneID" id="117011786"/>
<dbReference type="InParanoid" id="B2KI30"/>
<dbReference type="OrthoDB" id="671595at2759"/>
<dbReference type="Proteomes" id="UP000472240">
    <property type="component" value="Unplaced"/>
</dbReference>
<dbReference type="GO" id="GO:0005737">
    <property type="term" value="C:cytoplasm"/>
    <property type="evidence" value="ECO:0007669"/>
    <property type="project" value="UniProtKB-SubCell"/>
</dbReference>
<dbReference type="GO" id="GO:0005615">
    <property type="term" value="C:extracellular space"/>
    <property type="evidence" value="ECO:0007669"/>
    <property type="project" value="InterPro"/>
</dbReference>
<dbReference type="GO" id="GO:0005634">
    <property type="term" value="C:nucleus"/>
    <property type="evidence" value="ECO:0007669"/>
    <property type="project" value="UniProtKB-SubCell"/>
</dbReference>
<dbReference type="GO" id="GO:0004867">
    <property type="term" value="F:serine-type endopeptidase inhibitor activity"/>
    <property type="evidence" value="ECO:0007669"/>
    <property type="project" value="UniProtKB-KW"/>
</dbReference>
<dbReference type="CDD" id="cd19569">
    <property type="entry name" value="serpinB10_bomapin"/>
    <property type="match status" value="1"/>
</dbReference>
<dbReference type="FunFam" id="3.30.497.10:FF:000004">
    <property type="entry name" value="Serpin family B member 1"/>
    <property type="match status" value="1"/>
</dbReference>
<dbReference type="FunFam" id="2.30.39.10:FF:000001">
    <property type="entry name" value="Serpin family B member 2"/>
    <property type="match status" value="1"/>
</dbReference>
<dbReference type="Gene3D" id="2.30.39.10">
    <property type="entry name" value="Alpha-1-antitrypsin, domain 1"/>
    <property type="match status" value="1"/>
</dbReference>
<dbReference type="Gene3D" id="3.30.497.10">
    <property type="entry name" value="Antithrombin, subunit I, domain 2"/>
    <property type="match status" value="1"/>
</dbReference>
<dbReference type="InterPro" id="IPR023795">
    <property type="entry name" value="Serpin_CS"/>
</dbReference>
<dbReference type="InterPro" id="IPR023796">
    <property type="entry name" value="Serpin_dom"/>
</dbReference>
<dbReference type="InterPro" id="IPR000215">
    <property type="entry name" value="Serpin_fam"/>
</dbReference>
<dbReference type="InterPro" id="IPR036186">
    <property type="entry name" value="Serpin_sf"/>
</dbReference>
<dbReference type="InterPro" id="IPR042178">
    <property type="entry name" value="Serpin_sf_1"/>
</dbReference>
<dbReference type="InterPro" id="IPR042185">
    <property type="entry name" value="Serpin_sf_2"/>
</dbReference>
<dbReference type="PANTHER" id="PTHR11461">
    <property type="entry name" value="SERINE PROTEASE INHIBITOR, SERPIN"/>
    <property type="match status" value="1"/>
</dbReference>
<dbReference type="PANTHER" id="PTHR11461:SF175">
    <property type="entry name" value="SERPIN B10"/>
    <property type="match status" value="1"/>
</dbReference>
<dbReference type="Pfam" id="PF00079">
    <property type="entry name" value="Serpin"/>
    <property type="match status" value="1"/>
</dbReference>
<dbReference type="SMART" id="SM00093">
    <property type="entry name" value="SERPIN"/>
    <property type="match status" value="1"/>
</dbReference>
<dbReference type="SUPFAM" id="SSF56574">
    <property type="entry name" value="Serpins"/>
    <property type="match status" value="1"/>
</dbReference>
<dbReference type="PROSITE" id="PS00284">
    <property type="entry name" value="SERPIN"/>
    <property type="match status" value="1"/>
</dbReference>
<evidence type="ECO:0000250" key="1"/>
<evidence type="ECO:0000305" key="2"/>
<proteinExistence type="inferred from homology"/>
<accession>B2KI30</accession>
<name>SPB10_RHIFE</name>
<organism>
    <name type="scientific">Rhinolophus ferrumequinum</name>
    <name type="common">Greater horseshoe bat</name>
    <dbReference type="NCBI Taxonomy" id="59479"/>
    <lineage>
        <taxon>Eukaryota</taxon>
        <taxon>Metazoa</taxon>
        <taxon>Chordata</taxon>
        <taxon>Craniata</taxon>
        <taxon>Vertebrata</taxon>
        <taxon>Euteleostomi</taxon>
        <taxon>Mammalia</taxon>
        <taxon>Eutheria</taxon>
        <taxon>Laurasiatheria</taxon>
        <taxon>Chiroptera</taxon>
        <taxon>Yinpterochiroptera</taxon>
        <taxon>Rhinolophoidea</taxon>
        <taxon>Rhinolophidae</taxon>
        <taxon>Rhinolophinae</taxon>
        <taxon>Rhinolophus</taxon>
    </lineage>
</organism>
<gene>
    <name type="primary">SERPINB10</name>
</gene>
<reference key="1">
    <citation type="submission" date="2008-04" db="EMBL/GenBank/DDBJ databases">
        <title>NISC comparative sequencing initiative.</title>
        <authorList>
            <person name="Antonellis A."/>
            <person name="Ayele K."/>
            <person name="Benjamin B."/>
            <person name="Blakesley R.W."/>
            <person name="Boakye A."/>
            <person name="Bouffard G.G."/>
            <person name="Brinkley C."/>
            <person name="Brooks S."/>
            <person name="Chu G."/>
            <person name="Coleman H."/>
            <person name="Engle J."/>
            <person name="Gestole M."/>
            <person name="Greene A."/>
            <person name="Guan X."/>
            <person name="Gupta J."/>
            <person name="Haghighi P."/>
            <person name="Han J."/>
            <person name="Hansen N."/>
            <person name="Ho S.-L."/>
            <person name="Hu P."/>
            <person name="Hunter G."/>
            <person name="Hurle B."/>
            <person name="Idol J.R."/>
            <person name="Kwong P."/>
            <person name="Laric P."/>
            <person name="Larson S."/>
            <person name="Lee-Lin S.-Q."/>
            <person name="Legaspi R."/>
            <person name="Madden M."/>
            <person name="Maduro Q.L."/>
            <person name="Maduro V.B."/>
            <person name="Margulies E.H."/>
            <person name="Masiello C."/>
            <person name="Maskeri B."/>
            <person name="McDowell J."/>
            <person name="Mojidi H.A."/>
            <person name="Mullikin J.C."/>
            <person name="Oestreicher J.S."/>
            <person name="Park M."/>
            <person name="Portnoy M.E."/>
            <person name="Prasad A."/>
            <person name="Puri O."/>
            <person name="Reddix-Dugue N."/>
            <person name="Schandler K."/>
            <person name="Schueler M.G."/>
            <person name="Sison C."/>
            <person name="Stantripop S."/>
            <person name="Stephen E."/>
            <person name="Taye A."/>
            <person name="Thomas J.W."/>
            <person name="Thomas P.J."/>
            <person name="Tsipouri V."/>
            <person name="Ung L."/>
            <person name="Vogt J.L."/>
            <person name="Wetherby K.D."/>
            <person name="Young A."/>
            <person name="Green E.D."/>
        </authorList>
    </citation>
    <scope>NUCLEOTIDE SEQUENCE [LARGE SCALE GENOMIC DNA]</scope>
</reference>
<comment type="function">
    <text evidence="1">Protease inhibitor that may play a role in the regulation of protease activities during hematopoiesis and apoptosis induced by TNF. May regulate protease activities in the cytoplasm and in the nucleus (By similarity).</text>
</comment>
<comment type="subcellular location">
    <subcellularLocation>
        <location evidence="1">Nucleus</location>
    </subcellularLocation>
    <subcellularLocation>
        <location evidence="1">Cytoplasm</location>
    </subcellularLocation>
</comment>
<comment type="similarity">
    <text evidence="2">Belongs to the serpin family. Ov-serpin subfamily.</text>
</comment>
<keyword id="KW-0963">Cytoplasm</keyword>
<keyword id="KW-0539">Nucleus</keyword>
<keyword id="KW-0646">Protease inhibitor</keyword>
<keyword id="KW-1185">Reference proteome</keyword>
<keyword id="KW-0722">Serine protease inhibitor</keyword>
<feature type="chain" id="PRO_0000355549" description="Serpin B10">
    <location>
        <begin position="1"/>
        <end position="397"/>
    </location>
</feature>
<feature type="short sequence motif" description="Nuclear localization signal" evidence="1">
    <location>
        <begin position="74"/>
        <end position="77"/>
    </location>
</feature>
<feature type="site" description="Reactive bond" evidence="1">
    <location>
        <begin position="362"/>
        <end position="363"/>
    </location>
</feature>
<sequence length="397" mass="45401">MDSLTKSINQFALEFSKKLAESAEGKNIFFSPWGISTSLAMVYLGTRGTTAAQIAQVLQFNRDQDSKFFPESEKKRKMDFNSRKVEEIRSDFQTLISEINNPSNAYVLKTANGIYGEKTYPFHNKYLEDMKTYFGVEPQSVNFLEAPDQTRNEINSWVESQTQGKILNLLPDDAVDSATRMVLVNAIYFKGIWEHQFSARDTREKPFRINKNTSKPVQMMSMKKKLQVFHIENPQAIGLQLYYESRDLSLFLLLPEDVSGLDQLEKAVTYEKLSEWTSADMMELYDVQLHLPKFKLEESYDLKSALSSMGMSDAFNQSKADFSGMSVEGNLFLSNVFHKSFVEINEQGTEASAGTGSEVSLRIRLPSIEFNADHPFLFFIRHNKTNSILFYGRFCSP</sequence>
<protein>
    <recommendedName>
        <fullName>Serpin B10</fullName>
    </recommendedName>
    <alternativeName>
        <fullName>Proteinase inhibitor 10</fullName>
    </alternativeName>
</protein>